<keyword id="KW-0029">Amino-acid transport</keyword>
<keyword id="KW-0997">Cell inner membrane</keyword>
<keyword id="KW-1003">Cell membrane</keyword>
<keyword id="KW-0472">Membrane</keyword>
<keyword id="KW-1185">Reference proteome</keyword>
<keyword id="KW-0769">Symport</keyword>
<keyword id="KW-0812">Transmembrane</keyword>
<keyword id="KW-1133">Transmembrane helix</keyword>
<keyword id="KW-0813">Transport</keyword>
<dbReference type="EMBL" id="AE006468">
    <property type="protein sequence ID" value="AAL22116.1"/>
    <property type="molecule type" value="Genomic_DNA"/>
</dbReference>
<dbReference type="RefSeq" id="NP_462157.1">
    <property type="nucleotide sequence ID" value="NC_003197.2"/>
</dbReference>
<dbReference type="RefSeq" id="WP_000108129.1">
    <property type="nucleotide sequence ID" value="NC_003197.2"/>
</dbReference>
<dbReference type="STRING" id="99287.STM3243"/>
<dbReference type="PaxDb" id="99287-STM3243"/>
<dbReference type="GeneID" id="1254766"/>
<dbReference type="KEGG" id="stm:STM3243"/>
<dbReference type="PATRIC" id="fig|99287.12.peg.3439"/>
<dbReference type="HOGENOM" id="CLU_052043_1_1_6"/>
<dbReference type="OMA" id="SPQNMAE"/>
<dbReference type="PhylomeDB" id="Q8ZLW1"/>
<dbReference type="BioCyc" id="SENT99287:STM3243-MONOMER"/>
<dbReference type="Proteomes" id="UP000001014">
    <property type="component" value="Chromosome"/>
</dbReference>
<dbReference type="GO" id="GO:0005886">
    <property type="term" value="C:plasma membrane"/>
    <property type="evidence" value="ECO:0000318"/>
    <property type="project" value="GO_Central"/>
</dbReference>
<dbReference type="GO" id="GO:0015194">
    <property type="term" value="F:L-serine transmembrane transporter activity"/>
    <property type="evidence" value="ECO:0007669"/>
    <property type="project" value="InterPro"/>
</dbReference>
<dbReference type="GO" id="GO:0015293">
    <property type="term" value="F:symporter activity"/>
    <property type="evidence" value="ECO:0007669"/>
    <property type="project" value="UniProtKB-UniRule"/>
</dbReference>
<dbReference type="GO" id="GO:0015565">
    <property type="term" value="F:threonine efflux transmembrane transporter activity"/>
    <property type="evidence" value="ECO:0007669"/>
    <property type="project" value="InterPro"/>
</dbReference>
<dbReference type="GO" id="GO:0022857">
    <property type="term" value="F:transmembrane transporter activity"/>
    <property type="evidence" value="ECO:0000318"/>
    <property type="project" value="GO_Central"/>
</dbReference>
<dbReference type="GO" id="GO:0006865">
    <property type="term" value="P:amino acid transport"/>
    <property type="evidence" value="ECO:0000318"/>
    <property type="project" value="GO_Central"/>
</dbReference>
<dbReference type="Gene3D" id="1.20.1740.10">
    <property type="entry name" value="Amino acid/polyamine transporter I"/>
    <property type="match status" value="1"/>
</dbReference>
<dbReference type="HAMAP" id="MF_01583">
    <property type="entry name" value="Thr_Ser_transp_TdcC"/>
    <property type="match status" value="1"/>
</dbReference>
<dbReference type="InterPro" id="IPR018227">
    <property type="entry name" value="Amino_acid_transport_2"/>
</dbReference>
<dbReference type="InterPro" id="IPR004694">
    <property type="entry name" value="Hydroxy_aa_transpt"/>
</dbReference>
<dbReference type="InterPro" id="IPR023726">
    <property type="entry name" value="Thr/Ser_transpt_TdcC"/>
</dbReference>
<dbReference type="NCBIfam" id="NF010152">
    <property type="entry name" value="PRK13629.1"/>
    <property type="match status" value="1"/>
</dbReference>
<dbReference type="NCBIfam" id="TIGR00814">
    <property type="entry name" value="stp"/>
    <property type="match status" value="1"/>
</dbReference>
<dbReference type="PANTHER" id="PTHR35334">
    <property type="entry name" value="SERINE TRANSPORTER"/>
    <property type="match status" value="1"/>
</dbReference>
<dbReference type="PANTHER" id="PTHR35334:SF1">
    <property type="entry name" value="THREONINE_SERINE TRANSPORTER TDCC"/>
    <property type="match status" value="1"/>
</dbReference>
<dbReference type="Pfam" id="PF03222">
    <property type="entry name" value="Trp_Tyr_perm"/>
    <property type="match status" value="1"/>
</dbReference>
<evidence type="ECO:0000255" key="1">
    <source>
        <dbReference type="HAMAP-Rule" id="MF_01583"/>
    </source>
</evidence>
<organism>
    <name type="scientific">Salmonella typhimurium (strain LT2 / SGSC1412 / ATCC 700720)</name>
    <dbReference type="NCBI Taxonomy" id="99287"/>
    <lineage>
        <taxon>Bacteria</taxon>
        <taxon>Pseudomonadati</taxon>
        <taxon>Pseudomonadota</taxon>
        <taxon>Gammaproteobacteria</taxon>
        <taxon>Enterobacterales</taxon>
        <taxon>Enterobacteriaceae</taxon>
        <taxon>Salmonella</taxon>
    </lineage>
</organism>
<protein>
    <recommendedName>
        <fullName evidence="1">Threonine/serine transporter TdcC</fullName>
    </recommendedName>
    <alternativeName>
        <fullName evidence="1">H(+)/threonine-serine symporter</fullName>
    </alternativeName>
</protein>
<reference key="1">
    <citation type="journal article" date="2001" name="Nature">
        <title>Complete genome sequence of Salmonella enterica serovar Typhimurium LT2.</title>
        <authorList>
            <person name="McClelland M."/>
            <person name="Sanderson K.E."/>
            <person name="Spieth J."/>
            <person name="Clifton S.W."/>
            <person name="Latreille P."/>
            <person name="Courtney L."/>
            <person name="Porwollik S."/>
            <person name="Ali J."/>
            <person name="Dante M."/>
            <person name="Du F."/>
            <person name="Hou S."/>
            <person name="Layman D."/>
            <person name="Leonard S."/>
            <person name="Nguyen C."/>
            <person name="Scott K."/>
            <person name="Holmes A."/>
            <person name="Grewal N."/>
            <person name="Mulvaney E."/>
            <person name="Ryan E."/>
            <person name="Sun H."/>
            <person name="Florea L."/>
            <person name="Miller W."/>
            <person name="Stoneking T."/>
            <person name="Nhan M."/>
            <person name="Waterston R."/>
            <person name="Wilson R.K."/>
        </authorList>
    </citation>
    <scope>NUCLEOTIDE SEQUENCE [LARGE SCALE GENOMIC DNA]</scope>
    <source>
        <strain>LT2 / SGSC1412 / ATCC 700720</strain>
    </source>
</reference>
<proteinExistence type="inferred from homology"/>
<comment type="function">
    <text evidence="1">Involved in the import of threonine and serine into the cell, with the concomitant import of a proton (symport system).</text>
</comment>
<comment type="catalytic activity">
    <reaction evidence="1">
        <text>L-threonine(in) + H(+)(in) = L-threonine(out) + H(+)(out)</text>
        <dbReference type="Rhea" id="RHEA:28883"/>
        <dbReference type="ChEBI" id="CHEBI:15378"/>
        <dbReference type="ChEBI" id="CHEBI:57926"/>
    </reaction>
    <physiologicalReaction direction="right-to-left" evidence="1">
        <dbReference type="Rhea" id="RHEA:28885"/>
    </physiologicalReaction>
</comment>
<comment type="catalytic activity">
    <reaction evidence="1">
        <text>L-serine(in) + H(+)(in) = L-serine(out) + H(+)(out)</text>
        <dbReference type="Rhea" id="RHEA:28887"/>
        <dbReference type="ChEBI" id="CHEBI:15378"/>
        <dbReference type="ChEBI" id="CHEBI:33384"/>
    </reaction>
    <physiologicalReaction direction="right-to-left" evidence="1">
        <dbReference type="Rhea" id="RHEA:28889"/>
    </physiologicalReaction>
</comment>
<comment type="subcellular location">
    <subcellularLocation>
        <location evidence="1">Cell inner membrane</location>
        <topology evidence="1">Multi-pass membrane protein</topology>
    </subcellularLocation>
</comment>
<comment type="similarity">
    <text evidence="1">Belongs to the amino acid/polyamine transporter 2 family. SdaC/TdcC subfamily.</text>
</comment>
<gene>
    <name evidence="1" type="primary">tdcC</name>
    <name type="ordered locus">STM3243</name>
</gene>
<name>TDCC_SALTY</name>
<sequence>MSTTDSIVSSQAKQSSWRKSDTTWTLGLFGTAIGAGVLFFPIRAGFGGLIPILLMLVLAYPIAFYCHRALARLCLSGSNPSGNITETVEEHFGKTGGVVITFLYFFAICPLLWIYGVTITNTFMTFWENQLQMPALNRGFVALFLLLLMAFVIWFGKDLMVKVMSYLVWPFIASLVLISLSLIPYWNSAVIDQVDLSNIALTGHDGILVTVWLGISIMVFSFNFSPIVSSFVVSKREEYEKEFGREFTERKCSQIISRASMLMVAVVMFFAFSCLFTLSPQNMADAKAQNIPVLSYLANHFASLSGTKSTFATVLEYGASIIALVAIFKSFFGHYLGTLEGLNGLVLKFGYKGDKTKVSMGKLNTISMIFIMGSTWVVAYANPNILDLIEAMGAPIIASLLCLLPMYAIRKAPSLAKYRGRLDNVFVTLIGLLTILNIVYKLF</sequence>
<feature type="chain" id="PRO_0000309170" description="Threonine/serine transporter TdcC">
    <location>
        <begin position="1"/>
        <end position="443"/>
    </location>
</feature>
<feature type="transmembrane region" description="Helical" evidence="1">
    <location>
        <begin position="22"/>
        <end position="42"/>
    </location>
</feature>
<feature type="transmembrane region" description="Helical" evidence="1">
    <location>
        <begin position="44"/>
        <end position="64"/>
    </location>
</feature>
<feature type="transmembrane region" description="Helical" evidence="1">
    <location>
        <begin position="97"/>
        <end position="117"/>
    </location>
</feature>
<feature type="transmembrane region" description="Helical" evidence="1">
    <location>
        <begin position="140"/>
        <end position="160"/>
    </location>
</feature>
<feature type="transmembrane region" description="Helical" evidence="1">
    <location>
        <begin position="163"/>
        <end position="183"/>
    </location>
</feature>
<feature type="transmembrane region" description="Helical" evidence="1">
    <location>
        <begin position="207"/>
        <end position="227"/>
    </location>
</feature>
<feature type="transmembrane region" description="Helical" evidence="1">
    <location>
        <begin position="259"/>
        <end position="279"/>
    </location>
</feature>
<feature type="transmembrane region" description="Helical" evidence="1">
    <location>
        <begin position="319"/>
        <end position="339"/>
    </location>
</feature>
<feature type="transmembrane region" description="Helical" evidence="1">
    <location>
        <begin position="366"/>
        <end position="386"/>
    </location>
</feature>
<feature type="transmembrane region" description="Helical" evidence="1">
    <location>
        <begin position="389"/>
        <end position="409"/>
    </location>
</feature>
<feature type="transmembrane region" description="Helical" evidence="1">
    <location>
        <begin position="423"/>
        <end position="443"/>
    </location>
</feature>
<accession>Q8ZLW1</accession>